<reference key="1">
    <citation type="journal article" date="2004" name="Nature">
        <title>The sequence and analysis of duplication-rich human chromosome 16.</title>
        <authorList>
            <person name="Martin J."/>
            <person name="Han C."/>
            <person name="Gordon L.A."/>
            <person name="Terry A."/>
            <person name="Prabhakar S."/>
            <person name="She X."/>
            <person name="Xie G."/>
            <person name="Hellsten U."/>
            <person name="Chan Y.M."/>
            <person name="Altherr M."/>
            <person name="Couronne O."/>
            <person name="Aerts A."/>
            <person name="Bajorek E."/>
            <person name="Black S."/>
            <person name="Blumer H."/>
            <person name="Branscomb E."/>
            <person name="Brown N.C."/>
            <person name="Bruno W.J."/>
            <person name="Buckingham J.M."/>
            <person name="Callen D.F."/>
            <person name="Campbell C.S."/>
            <person name="Campbell M.L."/>
            <person name="Campbell E.W."/>
            <person name="Caoile C."/>
            <person name="Challacombe J.F."/>
            <person name="Chasteen L.A."/>
            <person name="Chertkov O."/>
            <person name="Chi H.C."/>
            <person name="Christensen M."/>
            <person name="Clark L.M."/>
            <person name="Cohn J.D."/>
            <person name="Denys M."/>
            <person name="Detter J.C."/>
            <person name="Dickson M."/>
            <person name="Dimitrijevic-Bussod M."/>
            <person name="Escobar J."/>
            <person name="Fawcett J.J."/>
            <person name="Flowers D."/>
            <person name="Fotopulos D."/>
            <person name="Glavina T."/>
            <person name="Gomez M."/>
            <person name="Gonzales E."/>
            <person name="Goodstein D."/>
            <person name="Goodwin L.A."/>
            <person name="Grady D.L."/>
            <person name="Grigoriev I."/>
            <person name="Groza M."/>
            <person name="Hammon N."/>
            <person name="Hawkins T."/>
            <person name="Haydu L."/>
            <person name="Hildebrand C.E."/>
            <person name="Huang W."/>
            <person name="Israni S."/>
            <person name="Jett J."/>
            <person name="Jewett P.B."/>
            <person name="Kadner K."/>
            <person name="Kimball H."/>
            <person name="Kobayashi A."/>
            <person name="Krawczyk M.-C."/>
            <person name="Leyba T."/>
            <person name="Longmire J.L."/>
            <person name="Lopez F."/>
            <person name="Lou Y."/>
            <person name="Lowry S."/>
            <person name="Ludeman T."/>
            <person name="Manohar C.F."/>
            <person name="Mark G.A."/>
            <person name="McMurray K.L."/>
            <person name="Meincke L.J."/>
            <person name="Morgan J."/>
            <person name="Moyzis R.K."/>
            <person name="Mundt M.O."/>
            <person name="Munk A.C."/>
            <person name="Nandkeshwar R.D."/>
            <person name="Pitluck S."/>
            <person name="Pollard M."/>
            <person name="Predki P."/>
            <person name="Parson-Quintana B."/>
            <person name="Ramirez L."/>
            <person name="Rash S."/>
            <person name="Retterer J."/>
            <person name="Ricke D.O."/>
            <person name="Robinson D.L."/>
            <person name="Rodriguez A."/>
            <person name="Salamov A."/>
            <person name="Saunders E.H."/>
            <person name="Scott D."/>
            <person name="Shough T."/>
            <person name="Stallings R.L."/>
            <person name="Stalvey M."/>
            <person name="Sutherland R.D."/>
            <person name="Tapia R."/>
            <person name="Tesmer J.G."/>
            <person name="Thayer N."/>
            <person name="Thompson L.S."/>
            <person name="Tice H."/>
            <person name="Torney D.C."/>
            <person name="Tran-Gyamfi M."/>
            <person name="Tsai M."/>
            <person name="Ulanovsky L.E."/>
            <person name="Ustaszewska A."/>
            <person name="Vo N."/>
            <person name="White P.S."/>
            <person name="Williams A.L."/>
            <person name="Wills P.L."/>
            <person name="Wu J.-R."/>
            <person name="Wu K."/>
            <person name="Yang J."/>
            <person name="DeJong P."/>
            <person name="Bruce D."/>
            <person name="Doggett N.A."/>
            <person name="Deaven L."/>
            <person name="Schmutz J."/>
            <person name="Grimwood J."/>
            <person name="Richardson P."/>
            <person name="Rokhsar D.S."/>
            <person name="Eichler E.E."/>
            <person name="Gilna P."/>
            <person name="Lucas S.M."/>
            <person name="Myers R.M."/>
            <person name="Rubin E.M."/>
            <person name="Pennacchio L.A."/>
        </authorList>
    </citation>
    <scope>NUCLEOTIDE SEQUENCE [LARGE SCALE GENOMIC DNA]</scope>
</reference>
<proteinExistence type="inferred from homology"/>
<gene>
    <name type="primary">NPIPB4</name>
</gene>
<evidence type="ECO:0000255" key="1"/>
<evidence type="ECO:0000256" key="2">
    <source>
        <dbReference type="SAM" id="MobiDB-lite"/>
    </source>
</evidence>
<evidence type="ECO:0000305" key="3"/>
<protein>
    <recommendedName>
        <fullName>Nuclear pore complex-interacting protein family member B4</fullName>
    </recommendedName>
</protein>
<organism>
    <name type="scientific">Homo sapiens</name>
    <name type="common">Human</name>
    <dbReference type="NCBI Taxonomy" id="9606"/>
    <lineage>
        <taxon>Eukaryota</taxon>
        <taxon>Metazoa</taxon>
        <taxon>Chordata</taxon>
        <taxon>Craniata</taxon>
        <taxon>Vertebrata</taxon>
        <taxon>Euteleostomi</taxon>
        <taxon>Mammalia</taxon>
        <taxon>Eutheria</taxon>
        <taxon>Euarchontoglires</taxon>
        <taxon>Primates</taxon>
        <taxon>Haplorrhini</taxon>
        <taxon>Catarrhini</taxon>
        <taxon>Hominidae</taxon>
        <taxon>Homo</taxon>
    </lineage>
</organism>
<accession>C9JG80</accession>
<keyword id="KW-0472">Membrane</keyword>
<keyword id="KW-1185">Reference proteome</keyword>
<keyword id="KW-0812">Transmembrane</keyword>
<keyword id="KW-1133">Transmembrane helix</keyword>
<feature type="chain" id="PRO_0000423920" description="Nuclear pore complex-interacting protein family member B4">
    <location>
        <begin position="1"/>
        <end position="1138"/>
    </location>
</feature>
<feature type="transmembrane region" description="Helical" evidence="1">
    <location>
        <begin position="63"/>
        <end position="87"/>
    </location>
</feature>
<feature type="region of interest" description="Disordered" evidence="2">
    <location>
        <begin position="241"/>
        <end position="263"/>
    </location>
</feature>
<feature type="region of interest" description="Disordered" evidence="2">
    <location>
        <begin position="291"/>
        <end position="620"/>
    </location>
</feature>
<feature type="region of interest" description="Disordered" evidence="2">
    <location>
        <begin position="873"/>
        <end position="1138"/>
    </location>
</feature>
<feature type="compositionally biased region" description="Polar residues" evidence="2">
    <location>
        <begin position="252"/>
        <end position="262"/>
    </location>
</feature>
<feature type="compositionally biased region" description="Pro residues" evidence="2">
    <location>
        <begin position="349"/>
        <end position="359"/>
    </location>
</feature>
<feature type="compositionally biased region" description="Basic and acidic residues" evidence="2">
    <location>
        <begin position="406"/>
        <end position="416"/>
    </location>
</feature>
<feature type="compositionally biased region" description="Basic and acidic residues" evidence="2">
    <location>
        <begin position="448"/>
        <end position="458"/>
    </location>
</feature>
<feature type="compositionally biased region" description="Basic and acidic residues" evidence="2">
    <location>
        <begin position="490"/>
        <end position="500"/>
    </location>
</feature>
<feature type="compositionally biased region" description="Basic and acidic residues" evidence="2">
    <location>
        <begin position="532"/>
        <end position="542"/>
    </location>
</feature>
<feature type="compositionally biased region" description="Basic and acidic residues" evidence="2">
    <location>
        <begin position="574"/>
        <end position="584"/>
    </location>
</feature>
<feature type="compositionally biased region" description="Basic and acidic residues" evidence="2">
    <location>
        <begin position="908"/>
        <end position="918"/>
    </location>
</feature>
<feature type="compositionally biased region" description="Basic and acidic residues" evidence="2">
    <location>
        <begin position="950"/>
        <end position="960"/>
    </location>
</feature>
<feature type="compositionally biased region" description="Basic and acidic residues" evidence="2">
    <location>
        <begin position="992"/>
        <end position="1002"/>
    </location>
</feature>
<comment type="subcellular location">
    <subcellularLocation>
        <location evidence="3">Membrane</location>
        <topology evidence="3">Single-pass membrane protein</topology>
    </subcellularLocation>
</comment>
<comment type="similarity">
    <text evidence="3">Belongs to the NPIP family.</text>
</comment>
<name>NPIB4_HUMAN</name>
<sequence length="1138" mass="126699">MVKLSIVLTPQFLSHDQGQLTKELQQHVKSVTCPCEYLRKVINTLADHHHRGTDFGGSPWLHVIIAFPTSYKVVITLWIVYLWVSLLKTIFWSRNGHDGSTDVQQRAWRSNRRRQEGLRSICMHTKKRVSSFRGNKIVLKDVITLRRHVETKVRAKIRKRKVTTKINHHDKINGKRKTARKQKMFQRAQELRRRAEDYHKCKIPPSARKALCNWVRMAAAEHRHSSGLPYWPYLTAETLKNRMGHQPPPPTQQHSITDNSLSLKTPPECLLTPLPPSADDNLKTPPECVLTPLPPSADDNLKTPPECVLTPLPPSADDNLKTPPECLLTPLPPSADDKLKTPPECLLTPLPPSALPSAPPSADDNLKTRAECLLHPLPPSADDNLKTPSERQLTPLPPSAPPSADDNIKTPAERLRGPLPPSADDNLKTPSERQLTPLPPSAPPSADDNIKTPAERLRGPLPPSADDNLKTPSERQLTPLPPSAPPSADDNIKTPAERLRGPLPPSADDNLKTPSERQLTPLPPSAPPSADDNIKTPAERLRGPLPPSADDNLKTPSERQLTPLPPSAPPSADDNIKTPAERLRGPLPPSADDNLKTPSERQLTPLPPSAPPSADDNIKTPAFHPQRMIISRHLPSVSSLPFHPQLHPQQMIISRYLLSVCGFRFHHQPMIISRHLPSVSSLPFHPQLHPQQMIISRHLPSVCGGRFHPQRMIISRHLPSVSSLPFHPQLHPQQMIISRHLPSVCGGRFHPQRMIISRHLPSVSSLPFHPQLHPQQMIISRHLPSVCGGRFHPQRMIISRHLPSVSSLPFHPQLHPQQMIISRHLPSVCGGRFHPQRMIISRHLPSVSSLPFHPQLHPQQMIISRHLPSVCGERLRGPLPPSADDNLKTPSERQLTPLPPSAPPSADDNIKTPAERLRGPLPPSADDNLKTPSERQLTPLPPSAPPSADDNIKTPAERLRGPLPPSADDNLKTPSERQLTPLPPSAPPSADDNIKTPAERLRGPLPPSADDNLKTPPLATQEAEAEKPRKPKRQRAAEMEPPPEPKRRRVGDVEPSRKPKRRRAADVEPSSPEPKRRRVGDVEPSRKPKRRRAADVEPSSPEPKRRRVGDVEPSRKPKRRRAADVEPSLPEPKRRRLS</sequence>
<dbReference type="EMBL" id="AC092375">
    <property type="status" value="NOT_ANNOTATED_CDS"/>
    <property type="molecule type" value="Genomic_DNA"/>
</dbReference>
<dbReference type="SMR" id="C9JG80"/>
<dbReference type="FunCoup" id="C9JG80">
    <property type="interactions" value="11"/>
</dbReference>
<dbReference type="STRING" id="9606.ENSP00000404439"/>
<dbReference type="GlyGen" id="C9JG80">
    <property type="glycosylation" value="1 site"/>
</dbReference>
<dbReference type="iPTMnet" id="C9JG80"/>
<dbReference type="PhosphoSitePlus" id="C9JG80"/>
<dbReference type="BioMuta" id="NPIPB4"/>
<dbReference type="jPOST" id="C9JG80"/>
<dbReference type="MassIVE" id="C9JG80"/>
<dbReference type="PaxDb" id="9606-ENSP00000404439"/>
<dbReference type="PeptideAtlas" id="C9JG80"/>
<dbReference type="Antibodypedia" id="76105">
    <property type="antibodies" value="1 antibodies from 1 providers"/>
</dbReference>
<dbReference type="UCSC" id="uc059rwg.1">
    <property type="organism name" value="human"/>
</dbReference>
<dbReference type="AGR" id="HGNC:41985"/>
<dbReference type="GeneCards" id="NPIPB4"/>
<dbReference type="HGNC" id="HGNC:41985">
    <property type="gene designation" value="NPIPB4"/>
</dbReference>
<dbReference type="HPA" id="ENSG00000185864">
    <property type="expression patterns" value="Low tissue specificity"/>
</dbReference>
<dbReference type="neXtProt" id="NX_C9JG80"/>
<dbReference type="VEuPathDB" id="HostDB:ENSG00000185864"/>
<dbReference type="eggNOG" id="ENOG502TDBV">
    <property type="taxonomic scope" value="Eukaryota"/>
</dbReference>
<dbReference type="HOGENOM" id="CLU_308511_0_0_1"/>
<dbReference type="InParanoid" id="C9JG80"/>
<dbReference type="OMA" id="LCPHHVI"/>
<dbReference type="OrthoDB" id="9470913at2759"/>
<dbReference type="PAN-GO" id="C9JG80">
    <property type="GO annotations" value="1 GO annotation based on evolutionary models"/>
</dbReference>
<dbReference type="PhylomeDB" id="C9JG80"/>
<dbReference type="TreeFam" id="TF333389"/>
<dbReference type="ChiTaRS" id="NPIPB4">
    <property type="organism name" value="human"/>
</dbReference>
<dbReference type="Pharos" id="C9JG80">
    <property type="development level" value="Tdark"/>
</dbReference>
<dbReference type="PRO" id="PR:C9JG80"/>
<dbReference type="Proteomes" id="UP000005640">
    <property type="component" value="Chromosome 16"/>
</dbReference>
<dbReference type="RNAct" id="C9JG80">
    <property type="molecule type" value="protein"/>
</dbReference>
<dbReference type="Bgee" id="ENSG00000185864">
    <property type="expression patterns" value="Expressed in sural nerve and 101 other cell types or tissues"/>
</dbReference>
<dbReference type="ExpressionAtlas" id="C9JG80">
    <property type="expression patterns" value="baseline and differential"/>
</dbReference>
<dbReference type="GO" id="GO:0016020">
    <property type="term" value="C:membrane"/>
    <property type="evidence" value="ECO:0007669"/>
    <property type="project" value="UniProtKB-SubCell"/>
</dbReference>
<dbReference type="InterPro" id="IPR048893">
    <property type="entry name" value="NPB13-like_MII_rpt"/>
</dbReference>
<dbReference type="InterPro" id="IPR009443">
    <property type="entry name" value="NPIP"/>
</dbReference>
<dbReference type="InterPro" id="IPR054697">
    <property type="entry name" value="NPIP_N"/>
</dbReference>
<dbReference type="PANTHER" id="PTHR15438">
    <property type="entry name" value="NUCLEAR PORE COMPLEX INTERACTING PROTEIN"/>
    <property type="match status" value="1"/>
</dbReference>
<dbReference type="PANTHER" id="PTHR15438:SF5">
    <property type="entry name" value="NUCLEAR PORE COMPLEX-INTERACTING PROTEIN FAMILY MEMBER A2-RELATED"/>
    <property type="match status" value="1"/>
</dbReference>
<dbReference type="Pfam" id="PF20885">
    <property type="entry name" value="NPB13-l_MII_rpt"/>
    <property type="match status" value="2"/>
</dbReference>
<dbReference type="Pfam" id="PF06409">
    <property type="entry name" value="NPIP"/>
    <property type="match status" value="1"/>
</dbReference>